<sequence>MESKPKEFKPTWNLQNGKMILPYVLLFAGIILTLSLGSFDAGERGVEYNFFGRLGYYISYGMFFMFGAASFLPGLFTIGLGSLRLVKEEFELTNRLFSIPVFLLCYTVTLQVTGHVSTIPFASQGGFVGQLLSSGLEFVFGSTGKILIHLVFYFYGLILLLNESPLHFIGRILGTAGAKYKEGFKSGFGKRGESLGSLFQSAVEKFQKKESVPPWISTNTNEKNSLNQSYSLSNPHTHSYERNLGNKQPSELQNTLHSTFGKEGKLSDFLSKVDTGPTVTSKNSRIRFQNHGAFSGNFEEQGKVFRFESVSSSLSEKIREEKNFQKTPSRWEILDFRTSSFSNIISEKEPSVTLVVPSESEIKKEWNQTNPILQSEEIPDKFLFEEKEKVEQTDSGLENECYEEESVDSEENLSEEETLSSETSTEKDISENFKTSTISNSKEVSPNHTSNSSIHSLEKSEEKLELGLPFPPTTLVPEVKSKRSIYHVPLKSLKTTTTKIQDPLFKIEADKVARKIEEIIRQYGYESQVVSMERGPIITRYELTPPLGVKLGRITSLSDELRLYLAVKNIRIVAPIPGKSTIGIEVPNSIREDVFLGDILHQNLSLRPKKDLSILIGKDISGKLVGIDLNKLPHLLVAGTTGSGKSVCLNSMISSLVVHLSPEEVRFIMIDPKMVELTLYEDIPHLLMPVITDPKKATRALAWAIQEMEARYHSVSKLKCRDFKTYNEKVEQGAHRDGYKKMPYIVIFIDELADLMMVSGKDLEDAITRITQKSRAVGIHLIMATQRPSVDVITGLIKANCPARMAFHVAQKTDSKIILDQNGAESLLGKGDFLYKSPTAADLIRIQSPYVSEEEIEKIVEEARKFGKPSYVDFNLDEETESSVVDEGDEELFEQAWEIVRTDRKASASYLQRRMRIGYNKAARLMELMEERGYVSPQIGSKGREILK</sequence>
<keyword id="KW-0067">ATP-binding</keyword>
<keyword id="KW-0131">Cell cycle</keyword>
<keyword id="KW-0132">Cell division</keyword>
<keyword id="KW-0997">Cell inner membrane</keyword>
<keyword id="KW-1003">Cell membrane</keyword>
<keyword id="KW-0159">Chromosome partition</keyword>
<keyword id="KW-0238">DNA-binding</keyword>
<keyword id="KW-0472">Membrane</keyword>
<keyword id="KW-0547">Nucleotide-binding</keyword>
<keyword id="KW-0812">Transmembrane</keyword>
<keyword id="KW-1133">Transmembrane helix</keyword>
<feature type="chain" id="PRO_0000098266" description="DNA translocase FtsK">
    <location>
        <begin position="1"/>
        <end position="948"/>
    </location>
</feature>
<feature type="transmembrane region" description="Helical" evidence="2">
    <location>
        <begin position="19"/>
        <end position="39"/>
    </location>
</feature>
<feature type="transmembrane region" description="Helical" evidence="2">
    <location>
        <begin position="61"/>
        <end position="81"/>
    </location>
</feature>
<feature type="transmembrane region" description="Helical" evidence="2">
    <location>
        <begin position="96"/>
        <end position="116"/>
    </location>
</feature>
<feature type="transmembrane region" description="Helical" evidence="2">
    <location>
        <begin position="138"/>
        <end position="158"/>
    </location>
</feature>
<feature type="topological domain" description="Cytoplasmic" evidence="2">
    <location>
        <begin position="159"/>
        <end position="948"/>
    </location>
</feature>
<feature type="domain" description="FtsK" evidence="3">
    <location>
        <begin position="622"/>
        <end position="816"/>
    </location>
</feature>
<feature type="region of interest" description="Disordered" evidence="4">
    <location>
        <begin position="389"/>
        <end position="458"/>
    </location>
</feature>
<feature type="compositionally biased region" description="Acidic residues" evidence="4">
    <location>
        <begin position="400"/>
        <end position="419"/>
    </location>
</feature>
<feature type="compositionally biased region" description="Polar residues" evidence="4">
    <location>
        <begin position="432"/>
        <end position="451"/>
    </location>
</feature>
<feature type="binding site" evidence="3">
    <location>
        <begin position="642"/>
        <end position="647"/>
    </location>
    <ligand>
        <name>ATP</name>
        <dbReference type="ChEBI" id="CHEBI:30616"/>
    </ligand>
</feature>
<comment type="function">
    <text evidence="1">Essential cell division protein that coordinates cell division and chromosome segregation. The N-terminus is involved in assembly of the cell-division machinery. The C-terminus functions as a DNA motor that moves dsDNA in an ATP-dependent manner towards the dif recombination site, which is located within the replication terminus region. Required for activation of the Xer recombinase, allowing activation of chromosome unlinking by recombination (By similarity).</text>
</comment>
<comment type="subunit">
    <text evidence="1">Homohexamer. Forms a ring that surrounds DNA (By similarity).</text>
</comment>
<comment type="subcellular location">
    <subcellularLocation>
        <location evidence="1">Cell inner membrane</location>
        <topology evidence="1">Multi-pass membrane protein</topology>
    </subcellularLocation>
    <text evidence="1">Located at the septum.</text>
</comment>
<comment type="domain">
    <text evidence="1">Consists of an N-terminal domain, which is sufficient for the localization to the septal ring and is required for cell division, followed by a linker domain, and a C-terminal domain, which forms the translocation motor involved in chromosome segregation. The C-terminal domain can be further subdivided into alpha, beta and gamma subdomains. The alpha and beta subdomains form the DNA pump, and the gamma subdomain is a regulatory subdomain (By similarity).</text>
</comment>
<comment type="similarity">
    <text evidence="5">Belongs to the FtsK/SpoIIIE/SftA family.</text>
</comment>
<protein>
    <recommendedName>
        <fullName>DNA translocase FtsK</fullName>
    </recommendedName>
</protein>
<accession>Q72TG0</accession>
<dbReference type="EMBL" id="AE016823">
    <property type="protein sequence ID" value="AAS69668.1"/>
    <property type="molecule type" value="Genomic_DNA"/>
</dbReference>
<dbReference type="RefSeq" id="WP_000444199.1">
    <property type="nucleotide sequence ID" value="NC_005823.1"/>
</dbReference>
<dbReference type="SMR" id="Q72TG0"/>
<dbReference type="KEGG" id="lic:LIC_11061"/>
<dbReference type="HOGENOM" id="CLU_001981_9_7_12"/>
<dbReference type="Proteomes" id="UP000007037">
    <property type="component" value="Chromosome I"/>
</dbReference>
<dbReference type="GO" id="GO:0005886">
    <property type="term" value="C:plasma membrane"/>
    <property type="evidence" value="ECO:0007669"/>
    <property type="project" value="UniProtKB-SubCell"/>
</dbReference>
<dbReference type="GO" id="GO:0005524">
    <property type="term" value="F:ATP binding"/>
    <property type="evidence" value="ECO:0007669"/>
    <property type="project" value="UniProtKB-KW"/>
</dbReference>
<dbReference type="GO" id="GO:0016887">
    <property type="term" value="F:ATP hydrolysis activity"/>
    <property type="evidence" value="ECO:0007669"/>
    <property type="project" value="InterPro"/>
</dbReference>
<dbReference type="GO" id="GO:0003677">
    <property type="term" value="F:DNA binding"/>
    <property type="evidence" value="ECO:0007669"/>
    <property type="project" value="UniProtKB-KW"/>
</dbReference>
<dbReference type="GO" id="GO:0051301">
    <property type="term" value="P:cell division"/>
    <property type="evidence" value="ECO:0007669"/>
    <property type="project" value="UniProtKB-KW"/>
</dbReference>
<dbReference type="GO" id="GO:0007059">
    <property type="term" value="P:chromosome segregation"/>
    <property type="evidence" value="ECO:0007669"/>
    <property type="project" value="UniProtKB-KW"/>
</dbReference>
<dbReference type="CDD" id="cd01127">
    <property type="entry name" value="TrwB_TraG_TraD_VirD4"/>
    <property type="match status" value="1"/>
</dbReference>
<dbReference type="Gene3D" id="3.30.980.40">
    <property type="match status" value="1"/>
</dbReference>
<dbReference type="Gene3D" id="3.40.50.300">
    <property type="entry name" value="P-loop containing nucleotide triphosphate hydrolases"/>
    <property type="match status" value="1"/>
</dbReference>
<dbReference type="Gene3D" id="1.10.10.10">
    <property type="entry name" value="Winged helix-like DNA-binding domain superfamily/Winged helix DNA-binding domain"/>
    <property type="match status" value="1"/>
</dbReference>
<dbReference type="InterPro" id="IPR003593">
    <property type="entry name" value="AAA+_ATPase"/>
</dbReference>
<dbReference type="InterPro" id="IPR050206">
    <property type="entry name" value="FtsK/SpoIIIE/SftA"/>
</dbReference>
<dbReference type="InterPro" id="IPR025199">
    <property type="entry name" value="FtsK_4TM"/>
</dbReference>
<dbReference type="InterPro" id="IPR041027">
    <property type="entry name" value="FtsK_alpha"/>
</dbReference>
<dbReference type="InterPro" id="IPR002543">
    <property type="entry name" value="FtsK_dom"/>
</dbReference>
<dbReference type="InterPro" id="IPR018541">
    <property type="entry name" value="Ftsk_gamma"/>
</dbReference>
<dbReference type="InterPro" id="IPR027417">
    <property type="entry name" value="P-loop_NTPase"/>
</dbReference>
<dbReference type="InterPro" id="IPR036388">
    <property type="entry name" value="WH-like_DNA-bd_sf"/>
</dbReference>
<dbReference type="InterPro" id="IPR036390">
    <property type="entry name" value="WH_DNA-bd_sf"/>
</dbReference>
<dbReference type="PANTHER" id="PTHR22683:SF41">
    <property type="entry name" value="DNA TRANSLOCASE FTSK"/>
    <property type="match status" value="1"/>
</dbReference>
<dbReference type="PANTHER" id="PTHR22683">
    <property type="entry name" value="SPORULATION PROTEIN RELATED"/>
    <property type="match status" value="1"/>
</dbReference>
<dbReference type="Pfam" id="PF13491">
    <property type="entry name" value="FtsK_4TM"/>
    <property type="match status" value="1"/>
</dbReference>
<dbReference type="Pfam" id="PF17854">
    <property type="entry name" value="FtsK_alpha"/>
    <property type="match status" value="1"/>
</dbReference>
<dbReference type="Pfam" id="PF09397">
    <property type="entry name" value="FtsK_gamma"/>
    <property type="match status" value="1"/>
</dbReference>
<dbReference type="Pfam" id="PF01580">
    <property type="entry name" value="FtsK_SpoIIIE"/>
    <property type="match status" value="1"/>
</dbReference>
<dbReference type="SMART" id="SM00382">
    <property type="entry name" value="AAA"/>
    <property type="match status" value="1"/>
</dbReference>
<dbReference type="SMART" id="SM00843">
    <property type="entry name" value="Ftsk_gamma"/>
    <property type="match status" value="1"/>
</dbReference>
<dbReference type="SUPFAM" id="SSF52540">
    <property type="entry name" value="P-loop containing nucleoside triphosphate hydrolases"/>
    <property type="match status" value="1"/>
</dbReference>
<dbReference type="SUPFAM" id="SSF46785">
    <property type="entry name" value="Winged helix' DNA-binding domain"/>
    <property type="match status" value="1"/>
</dbReference>
<dbReference type="PROSITE" id="PS50901">
    <property type="entry name" value="FTSK"/>
    <property type="match status" value="1"/>
</dbReference>
<gene>
    <name type="primary">ftsK</name>
    <name type="ordered locus">LIC_11061</name>
</gene>
<name>FTSK_LEPIC</name>
<organism>
    <name type="scientific">Leptospira interrogans serogroup Icterohaemorrhagiae serovar copenhageni (strain Fiocruz L1-130)</name>
    <dbReference type="NCBI Taxonomy" id="267671"/>
    <lineage>
        <taxon>Bacteria</taxon>
        <taxon>Pseudomonadati</taxon>
        <taxon>Spirochaetota</taxon>
        <taxon>Spirochaetia</taxon>
        <taxon>Leptospirales</taxon>
        <taxon>Leptospiraceae</taxon>
        <taxon>Leptospira</taxon>
    </lineage>
</organism>
<reference key="1">
    <citation type="journal article" date="2004" name="J. Bacteriol.">
        <title>Comparative genomics of two Leptospira interrogans serovars reveals novel insights into physiology and pathogenesis.</title>
        <authorList>
            <person name="Nascimento A.L.T.O."/>
            <person name="Ko A.I."/>
            <person name="Martins E.A.L."/>
            <person name="Monteiro-Vitorello C.B."/>
            <person name="Ho P.L."/>
            <person name="Haake D.A."/>
            <person name="Verjovski-Almeida S."/>
            <person name="Hartskeerl R.A."/>
            <person name="Marques M.V."/>
            <person name="Oliveira M.C."/>
            <person name="Menck C.F.M."/>
            <person name="Leite L.C.C."/>
            <person name="Carrer H."/>
            <person name="Coutinho L.L."/>
            <person name="Degrave W.M."/>
            <person name="Dellagostin O.A."/>
            <person name="El-Dorry H."/>
            <person name="Ferro E.S."/>
            <person name="Ferro M.I.T."/>
            <person name="Furlan L.R."/>
            <person name="Gamberini M."/>
            <person name="Giglioti E.A."/>
            <person name="Goes-Neto A."/>
            <person name="Goldman G.H."/>
            <person name="Goldman M.H.S."/>
            <person name="Harakava R."/>
            <person name="Jeronimo S.M.B."/>
            <person name="Junqueira-de-Azevedo I.L.M."/>
            <person name="Kimura E.T."/>
            <person name="Kuramae E.E."/>
            <person name="Lemos E.G.M."/>
            <person name="Lemos M.V.F."/>
            <person name="Marino C.L."/>
            <person name="Nunes L.R."/>
            <person name="de Oliveira R.C."/>
            <person name="Pereira G.G."/>
            <person name="Reis M.S."/>
            <person name="Schriefer A."/>
            <person name="Siqueira W.J."/>
            <person name="Sommer P."/>
            <person name="Tsai S.M."/>
            <person name="Simpson A.J.G."/>
            <person name="Ferro J.A."/>
            <person name="Camargo L.E.A."/>
            <person name="Kitajima J.P."/>
            <person name="Setubal J.C."/>
            <person name="Van Sluys M.A."/>
        </authorList>
    </citation>
    <scope>NUCLEOTIDE SEQUENCE [LARGE SCALE GENOMIC DNA]</scope>
    <source>
        <strain>Fiocruz L1-130</strain>
    </source>
</reference>
<evidence type="ECO:0000250" key="1"/>
<evidence type="ECO:0000255" key="2"/>
<evidence type="ECO:0000255" key="3">
    <source>
        <dbReference type="PROSITE-ProRule" id="PRU00289"/>
    </source>
</evidence>
<evidence type="ECO:0000256" key="4">
    <source>
        <dbReference type="SAM" id="MobiDB-lite"/>
    </source>
</evidence>
<evidence type="ECO:0000305" key="5"/>
<proteinExistence type="inferred from homology"/>